<reference key="1">
    <citation type="journal article" date="1997" name="Microbiology">
        <title>The Bacillus subtilis genome from gerBC (311 degrees) to licR (334 degrees).</title>
        <authorList>
            <person name="Presecan E."/>
            <person name="Moszer I."/>
            <person name="Boursier L."/>
            <person name="Cruz Ramos H."/>
            <person name="De La Fuente V."/>
            <person name="Hullo M.-F."/>
            <person name="Lelong C."/>
            <person name="Schleich S."/>
            <person name="Sekowska A."/>
            <person name="Song B.H."/>
            <person name="Villani G."/>
            <person name="Kunst F."/>
            <person name="Danchin A."/>
            <person name="Glaser P."/>
        </authorList>
    </citation>
    <scope>NUCLEOTIDE SEQUENCE [GENOMIC DNA]</scope>
    <source>
        <strain>168</strain>
    </source>
</reference>
<reference key="2">
    <citation type="journal article" date="1997" name="Nature">
        <title>The complete genome sequence of the Gram-positive bacterium Bacillus subtilis.</title>
        <authorList>
            <person name="Kunst F."/>
            <person name="Ogasawara N."/>
            <person name="Moszer I."/>
            <person name="Albertini A.M."/>
            <person name="Alloni G."/>
            <person name="Azevedo V."/>
            <person name="Bertero M.G."/>
            <person name="Bessieres P."/>
            <person name="Bolotin A."/>
            <person name="Borchert S."/>
            <person name="Borriss R."/>
            <person name="Boursier L."/>
            <person name="Brans A."/>
            <person name="Braun M."/>
            <person name="Brignell S.C."/>
            <person name="Bron S."/>
            <person name="Brouillet S."/>
            <person name="Bruschi C.V."/>
            <person name="Caldwell B."/>
            <person name="Capuano V."/>
            <person name="Carter N.M."/>
            <person name="Choi S.-K."/>
            <person name="Codani J.-J."/>
            <person name="Connerton I.F."/>
            <person name="Cummings N.J."/>
            <person name="Daniel R.A."/>
            <person name="Denizot F."/>
            <person name="Devine K.M."/>
            <person name="Duesterhoeft A."/>
            <person name="Ehrlich S.D."/>
            <person name="Emmerson P.T."/>
            <person name="Entian K.-D."/>
            <person name="Errington J."/>
            <person name="Fabret C."/>
            <person name="Ferrari E."/>
            <person name="Foulger D."/>
            <person name="Fritz C."/>
            <person name="Fujita M."/>
            <person name="Fujita Y."/>
            <person name="Fuma S."/>
            <person name="Galizzi A."/>
            <person name="Galleron N."/>
            <person name="Ghim S.-Y."/>
            <person name="Glaser P."/>
            <person name="Goffeau A."/>
            <person name="Golightly E.J."/>
            <person name="Grandi G."/>
            <person name="Guiseppi G."/>
            <person name="Guy B.J."/>
            <person name="Haga K."/>
            <person name="Haiech J."/>
            <person name="Harwood C.R."/>
            <person name="Henaut A."/>
            <person name="Hilbert H."/>
            <person name="Holsappel S."/>
            <person name="Hosono S."/>
            <person name="Hullo M.-F."/>
            <person name="Itaya M."/>
            <person name="Jones L.-M."/>
            <person name="Joris B."/>
            <person name="Karamata D."/>
            <person name="Kasahara Y."/>
            <person name="Klaerr-Blanchard M."/>
            <person name="Klein C."/>
            <person name="Kobayashi Y."/>
            <person name="Koetter P."/>
            <person name="Koningstein G."/>
            <person name="Krogh S."/>
            <person name="Kumano M."/>
            <person name="Kurita K."/>
            <person name="Lapidus A."/>
            <person name="Lardinois S."/>
            <person name="Lauber J."/>
            <person name="Lazarevic V."/>
            <person name="Lee S.-M."/>
            <person name="Levine A."/>
            <person name="Liu H."/>
            <person name="Masuda S."/>
            <person name="Mauel C."/>
            <person name="Medigue C."/>
            <person name="Medina N."/>
            <person name="Mellado R.P."/>
            <person name="Mizuno M."/>
            <person name="Moestl D."/>
            <person name="Nakai S."/>
            <person name="Noback M."/>
            <person name="Noone D."/>
            <person name="O'Reilly M."/>
            <person name="Ogawa K."/>
            <person name="Ogiwara A."/>
            <person name="Oudega B."/>
            <person name="Park S.-H."/>
            <person name="Parro V."/>
            <person name="Pohl T.M."/>
            <person name="Portetelle D."/>
            <person name="Porwollik S."/>
            <person name="Prescott A.M."/>
            <person name="Presecan E."/>
            <person name="Pujic P."/>
            <person name="Purnelle B."/>
            <person name="Rapoport G."/>
            <person name="Rey M."/>
            <person name="Reynolds S."/>
            <person name="Rieger M."/>
            <person name="Rivolta C."/>
            <person name="Rocha E."/>
            <person name="Roche B."/>
            <person name="Rose M."/>
            <person name="Sadaie Y."/>
            <person name="Sato T."/>
            <person name="Scanlan E."/>
            <person name="Schleich S."/>
            <person name="Schroeter R."/>
            <person name="Scoffone F."/>
            <person name="Sekiguchi J."/>
            <person name="Sekowska A."/>
            <person name="Seror S.J."/>
            <person name="Serror P."/>
            <person name="Shin B.-S."/>
            <person name="Soldo B."/>
            <person name="Sorokin A."/>
            <person name="Tacconi E."/>
            <person name="Takagi T."/>
            <person name="Takahashi H."/>
            <person name="Takemaru K."/>
            <person name="Takeuchi M."/>
            <person name="Tamakoshi A."/>
            <person name="Tanaka T."/>
            <person name="Terpstra P."/>
            <person name="Tognoni A."/>
            <person name="Tosato V."/>
            <person name="Uchiyama S."/>
            <person name="Vandenbol M."/>
            <person name="Vannier F."/>
            <person name="Vassarotti A."/>
            <person name="Viari A."/>
            <person name="Wambutt R."/>
            <person name="Wedler E."/>
            <person name="Wedler H."/>
            <person name="Weitzenegger T."/>
            <person name="Winters P."/>
            <person name="Wipat A."/>
            <person name="Yamamoto H."/>
            <person name="Yamane K."/>
            <person name="Yasumoto K."/>
            <person name="Yata K."/>
            <person name="Yoshida K."/>
            <person name="Yoshikawa H.-F."/>
            <person name="Zumstein E."/>
            <person name="Yoshikawa H."/>
            <person name="Danchin A."/>
        </authorList>
    </citation>
    <scope>NUCLEOTIDE SEQUENCE [LARGE SCALE GENOMIC DNA]</scope>
    <source>
        <strain>168</strain>
    </source>
</reference>
<reference key="3">
    <citation type="journal article" date="2009" name="Microbiology">
        <title>From a consortium sequence to a unified sequence: the Bacillus subtilis 168 reference genome a decade later.</title>
        <authorList>
            <person name="Barbe V."/>
            <person name="Cruveiller S."/>
            <person name="Kunst F."/>
            <person name="Lenoble P."/>
            <person name="Meurice G."/>
            <person name="Sekowska A."/>
            <person name="Vallenet D."/>
            <person name="Wang T."/>
            <person name="Moszer I."/>
            <person name="Medigue C."/>
            <person name="Danchin A."/>
        </authorList>
    </citation>
    <scope>SEQUENCE REVISION TO 198</scope>
</reference>
<proteinExistence type="predicted"/>
<evidence type="ECO:0000255" key="1"/>
<evidence type="ECO:0000255" key="2">
    <source>
        <dbReference type="PROSITE-ProRule" id="PRU00325"/>
    </source>
</evidence>
<evidence type="ECO:0000305" key="3"/>
<gene>
    <name type="primary">ywqB</name>
    <name type="ordered locus">BSU36270</name>
</gene>
<protein>
    <recommendedName>
        <fullName>Uncharacterized protein YwqB</fullName>
    </recommendedName>
</protein>
<organism>
    <name type="scientific">Bacillus subtilis (strain 168)</name>
    <dbReference type="NCBI Taxonomy" id="224308"/>
    <lineage>
        <taxon>Bacteria</taxon>
        <taxon>Bacillati</taxon>
        <taxon>Bacillota</taxon>
        <taxon>Bacilli</taxon>
        <taxon>Bacillales</taxon>
        <taxon>Bacillaceae</taxon>
        <taxon>Bacillus</taxon>
    </lineage>
</organism>
<keyword id="KW-0175">Coiled coil</keyword>
<keyword id="KW-0479">Metal-binding</keyword>
<keyword id="KW-1185">Reference proteome</keyword>
<keyword id="KW-0862">Zinc</keyword>
<keyword id="KW-0863">Zinc-finger</keyword>
<sequence>MLQNMISKDDVLASAEQLKELLPYNEENVQLIKKALILYRQDSVYRLQAVSPTEVTAYVQDVVPVRVTLNLFVIVKSGCSCPSGRICRHMLAVFLYVYAMFERVGTFTEYWLEREKLEESKELVRRQFQEKVLPNEESLSSWLAFFDSEFSLWQARTPEGSQNMQGLYYGYLSALKKHAPNKPELKSLYQIHSAIAVWLRMFTLIEAGKLNPEQDFYSLNPYVEQLMDTIYSSIDKLKTYALSFALDPFLDKTPDVIRHLLLKEEIFQYERIRVFGEIWSALLSRPKWVAREQEILKKEAGRRFSPELQFGRLHLEFLQKNDDVIFEEADQFPPEALPYTFQWLSEMTAKKDWKRLKTWYQQIEPIAMGYTKLDKPFKEIRDVIGELFLLLNAYVQQTNDQALFERFAAGCLPYTFTEYSHHLYEKKRYAEWIEIHSLVGFSINEMDKMMLKEIAASDPEALIPAYHREVAFFIDQKNRSSYKEAARYLKKLRTLYKKAKKQKVWERYIQLLSSHYKRLRALQEELQKGKLIDGES</sequence>
<dbReference type="EMBL" id="Z92952">
    <property type="protein sequence ID" value="CAB07454.1"/>
    <property type="molecule type" value="Genomic_DNA"/>
</dbReference>
<dbReference type="EMBL" id="AL009126">
    <property type="protein sequence ID" value="CAB15644.2"/>
    <property type="molecule type" value="Genomic_DNA"/>
</dbReference>
<dbReference type="PIR" id="E70066">
    <property type="entry name" value="E70066"/>
</dbReference>
<dbReference type="RefSeq" id="NP_391508.2">
    <property type="nucleotide sequence ID" value="NC_000964.3"/>
</dbReference>
<dbReference type="RefSeq" id="WP_003227806.1">
    <property type="nucleotide sequence ID" value="NZ_OZ025638.1"/>
</dbReference>
<dbReference type="SMR" id="P96714"/>
<dbReference type="FunCoup" id="P96714">
    <property type="interactions" value="53"/>
</dbReference>
<dbReference type="STRING" id="224308.BSU36270"/>
<dbReference type="PaxDb" id="224308-BSU36270"/>
<dbReference type="EnsemblBacteria" id="CAB15644">
    <property type="protein sequence ID" value="CAB15644"/>
    <property type="gene ID" value="BSU_36270"/>
</dbReference>
<dbReference type="GeneID" id="936903"/>
<dbReference type="KEGG" id="bsu:BSU36270"/>
<dbReference type="PATRIC" id="fig|224308.179.peg.3926"/>
<dbReference type="eggNOG" id="COG4715">
    <property type="taxonomic scope" value="Bacteria"/>
</dbReference>
<dbReference type="InParanoid" id="P96714"/>
<dbReference type="OrthoDB" id="7593573at2"/>
<dbReference type="BioCyc" id="BSUB:BSU36270-MONOMER"/>
<dbReference type="Proteomes" id="UP000001570">
    <property type="component" value="Chromosome"/>
</dbReference>
<dbReference type="GO" id="GO:0008270">
    <property type="term" value="F:zinc ion binding"/>
    <property type="evidence" value="ECO:0007669"/>
    <property type="project" value="UniProtKB-KW"/>
</dbReference>
<dbReference type="InterPro" id="IPR007527">
    <property type="entry name" value="Znf_SWIM"/>
</dbReference>
<dbReference type="Pfam" id="PF04434">
    <property type="entry name" value="SWIM"/>
    <property type="match status" value="1"/>
</dbReference>
<dbReference type="PROSITE" id="PS50966">
    <property type="entry name" value="ZF_SWIM"/>
    <property type="match status" value="1"/>
</dbReference>
<feature type="chain" id="PRO_0000360638" description="Uncharacterized protein YwqB">
    <location>
        <begin position="1"/>
        <end position="536"/>
    </location>
</feature>
<feature type="zinc finger region" description="SWIM-type" evidence="2">
    <location>
        <begin position="71"/>
        <end position="98"/>
    </location>
</feature>
<feature type="coiled-coil region" evidence="1">
    <location>
        <begin position="482"/>
        <end position="528"/>
    </location>
</feature>
<feature type="sequence conflict" description="In Ref. 1; CAB07454." evidence="3" ref="1">
    <original>W</original>
    <variation>C</variation>
    <location>
        <position position="198"/>
    </location>
</feature>
<accession>P96714</accession>
<accession>Q795B3</accession>
<name>YWQB_BACSU</name>